<accession>B5Z472</accession>
<keyword id="KW-0285">Flavoprotein</keyword>
<keyword id="KW-0288">FMN</keyword>
<keyword id="KW-0560">Oxidoreductase</keyword>
<keyword id="KW-0664">Pyridoxine biosynthesis</keyword>
<proteinExistence type="inferred from homology"/>
<name>PDXH_ECO5E</name>
<sequence>MSDNDELQQIAHLRREYTKGGLRRRDLPADPLTLFERWLSQACEAKLADPTAMVVATVDEHGQPYQRIVLLKHYDEKGMVFYTNLGSRKAHQIENNPRVSLLFPWHTLERQVMVIGKAERLSTLEVMKYFHSRPRDSQIGSWVSKQSSRISARGILESKFLELKQKFQQGEVPLPSFWGGFRVSLEQIEFWQGGEHRLHDRFLYQRENDAWKIDRLAP</sequence>
<protein>
    <recommendedName>
        <fullName evidence="1">Pyridoxine/pyridoxamine 5'-phosphate oxidase</fullName>
        <ecNumber evidence="1">1.4.3.5</ecNumber>
    </recommendedName>
    <alternativeName>
        <fullName evidence="1">PNP/PMP oxidase</fullName>
        <shortName evidence="1">PNPOx</shortName>
    </alternativeName>
    <alternativeName>
        <fullName evidence="1">Pyridoxal 5'-phosphate synthase</fullName>
    </alternativeName>
</protein>
<dbReference type="EC" id="1.4.3.5" evidence="1"/>
<dbReference type="EMBL" id="CP001164">
    <property type="protein sequence ID" value="ACI36893.1"/>
    <property type="molecule type" value="Genomic_DNA"/>
</dbReference>
<dbReference type="RefSeq" id="WP_001282321.1">
    <property type="nucleotide sequence ID" value="NC_011353.1"/>
</dbReference>
<dbReference type="SMR" id="B5Z472"/>
<dbReference type="KEGG" id="ecf:ECH74115_2350"/>
<dbReference type="HOGENOM" id="CLU_032263_2_2_6"/>
<dbReference type="UniPathway" id="UPA01068">
    <property type="reaction ID" value="UER00304"/>
</dbReference>
<dbReference type="UniPathway" id="UPA01068">
    <property type="reaction ID" value="UER00305"/>
</dbReference>
<dbReference type="GO" id="GO:0010181">
    <property type="term" value="F:FMN binding"/>
    <property type="evidence" value="ECO:0007669"/>
    <property type="project" value="UniProtKB-UniRule"/>
</dbReference>
<dbReference type="GO" id="GO:0004733">
    <property type="term" value="F:pyridoxamine phosphate oxidase activity"/>
    <property type="evidence" value="ECO:0007669"/>
    <property type="project" value="UniProtKB-UniRule"/>
</dbReference>
<dbReference type="GO" id="GO:0008615">
    <property type="term" value="P:pyridoxine biosynthetic process"/>
    <property type="evidence" value="ECO:0007669"/>
    <property type="project" value="UniProtKB-KW"/>
</dbReference>
<dbReference type="FunFam" id="2.30.110.10:FF:000001">
    <property type="entry name" value="Pyridoxine/pyridoxamine 5'-phosphate oxidase"/>
    <property type="match status" value="1"/>
</dbReference>
<dbReference type="Gene3D" id="2.30.110.10">
    <property type="entry name" value="Electron Transport, Fmn-binding Protein, Chain A"/>
    <property type="match status" value="1"/>
</dbReference>
<dbReference type="HAMAP" id="MF_01629">
    <property type="entry name" value="PdxH"/>
    <property type="match status" value="1"/>
</dbReference>
<dbReference type="InterPro" id="IPR000659">
    <property type="entry name" value="Pyridox_Oxase"/>
</dbReference>
<dbReference type="InterPro" id="IPR019740">
    <property type="entry name" value="Pyridox_Oxase_CS"/>
</dbReference>
<dbReference type="InterPro" id="IPR011576">
    <property type="entry name" value="Pyridox_Oxase_N"/>
</dbReference>
<dbReference type="InterPro" id="IPR019576">
    <property type="entry name" value="Pyridoxamine_oxidase_dimer_C"/>
</dbReference>
<dbReference type="InterPro" id="IPR012349">
    <property type="entry name" value="Split_barrel_FMN-bd"/>
</dbReference>
<dbReference type="NCBIfam" id="TIGR00558">
    <property type="entry name" value="pdxH"/>
    <property type="match status" value="1"/>
</dbReference>
<dbReference type="NCBIfam" id="NF004231">
    <property type="entry name" value="PRK05679.1"/>
    <property type="match status" value="1"/>
</dbReference>
<dbReference type="PANTHER" id="PTHR10851:SF0">
    <property type="entry name" value="PYRIDOXINE-5'-PHOSPHATE OXIDASE"/>
    <property type="match status" value="1"/>
</dbReference>
<dbReference type="PANTHER" id="PTHR10851">
    <property type="entry name" value="PYRIDOXINE-5-PHOSPHATE OXIDASE"/>
    <property type="match status" value="1"/>
</dbReference>
<dbReference type="Pfam" id="PF10590">
    <property type="entry name" value="PNP_phzG_C"/>
    <property type="match status" value="1"/>
</dbReference>
<dbReference type="Pfam" id="PF01243">
    <property type="entry name" value="PNPOx_N"/>
    <property type="match status" value="1"/>
</dbReference>
<dbReference type="PIRSF" id="PIRSF000190">
    <property type="entry name" value="Pyd_amn-ph_oxd"/>
    <property type="match status" value="1"/>
</dbReference>
<dbReference type="SUPFAM" id="SSF50475">
    <property type="entry name" value="FMN-binding split barrel"/>
    <property type="match status" value="1"/>
</dbReference>
<dbReference type="PROSITE" id="PS01064">
    <property type="entry name" value="PYRIDOX_OXIDASE"/>
    <property type="match status" value="1"/>
</dbReference>
<reference key="1">
    <citation type="journal article" date="2011" name="Proc. Natl. Acad. Sci. U.S.A.">
        <title>Genomic anatomy of Escherichia coli O157:H7 outbreaks.</title>
        <authorList>
            <person name="Eppinger M."/>
            <person name="Mammel M.K."/>
            <person name="Leclerc J.E."/>
            <person name="Ravel J."/>
            <person name="Cebula T.A."/>
        </authorList>
    </citation>
    <scope>NUCLEOTIDE SEQUENCE [LARGE SCALE GENOMIC DNA]</scope>
    <source>
        <strain>EC4115 / EHEC</strain>
    </source>
</reference>
<evidence type="ECO:0000255" key="1">
    <source>
        <dbReference type="HAMAP-Rule" id="MF_01629"/>
    </source>
</evidence>
<gene>
    <name evidence="1" type="primary">pdxH</name>
    <name type="ordered locus">ECH74115_2350</name>
</gene>
<feature type="chain" id="PRO_1000186307" description="Pyridoxine/pyridoxamine 5'-phosphate oxidase">
    <location>
        <begin position="1"/>
        <end position="218"/>
    </location>
</feature>
<feature type="binding site" evidence="1">
    <location>
        <begin position="14"/>
        <end position="17"/>
    </location>
    <ligand>
        <name>substrate</name>
    </ligand>
</feature>
<feature type="binding site" evidence="1">
    <location>
        <begin position="67"/>
        <end position="72"/>
    </location>
    <ligand>
        <name>FMN</name>
        <dbReference type="ChEBI" id="CHEBI:58210"/>
    </ligand>
</feature>
<feature type="binding site" evidence="1">
    <location>
        <position position="72"/>
    </location>
    <ligand>
        <name>substrate</name>
    </ligand>
</feature>
<feature type="binding site" evidence="1">
    <location>
        <begin position="82"/>
        <end position="83"/>
    </location>
    <ligand>
        <name>FMN</name>
        <dbReference type="ChEBI" id="CHEBI:58210"/>
    </ligand>
</feature>
<feature type="binding site" evidence="1">
    <location>
        <position position="88"/>
    </location>
    <ligand>
        <name>FMN</name>
        <dbReference type="ChEBI" id="CHEBI:58210"/>
    </ligand>
</feature>
<feature type="binding site" evidence="1">
    <location>
        <position position="89"/>
    </location>
    <ligand>
        <name>FMN</name>
        <dbReference type="ChEBI" id="CHEBI:58210"/>
    </ligand>
</feature>
<feature type="binding site" evidence="1">
    <location>
        <position position="111"/>
    </location>
    <ligand>
        <name>FMN</name>
        <dbReference type="ChEBI" id="CHEBI:58210"/>
    </ligand>
</feature>
<feature type="binding site" evidence="1">
    <location>
        <position position="129"/>
    </location>
    <ligand>
        <name>substrate</name>
    </ligand>
</feature>
<feature type="binding site" evidence="1">
    <location>
        <position position="133"/>
    </location>
    <ligand>
        <name>substrate</name>
    </ligand>
</feature>
<feature type="binding site" evidence="1">
    <location>
        <position position="137"/>
    </location>
    <ligand>
        <name>substrate</name>
    </ligand>
</feature>
<feature type="binding site" evidence="1">
    <location>
        <begin position="146"/>
        <end position="147"/>
    </location>
    <ligand>
        <name>FMN</name>
        <dbReference type="ChEBI" id="CHEBI:58210"/>
    </ligand>
</feature>
<feature type="binding site" evidence="1">
    <location>
        <position position="191"/>
    </location>
    <ligand>
        <name>FMN</name>
        <dbReference type="ChEBI" id="CHEBI:58210"/>
    </ligand>
</feature>
<feature type="binding site" evidence="1">
    <location>
        <begin position="197"/>
        <end position="199"/>
    </location>
    <ligand>
        <name>substrate</name>
    </ligand>
</feature>
<feature type="binding site" evidence="1">
    <location>
        <position position="201"/>
    </location>
    <ligand>
        <name>FMN</name>
        <dbReference type="ChEBI" id="CHEBI:58210"/>
    </ligand>
</feature>
<organism>
    <name type="scientific">Escherichia coli O157:H7 (strain EC4115 / EHEC)</name>
    <dbReference type="NCBI Taxonomy" id="444450"/>
    <lineage>
        <taxon>Bacteria</taxon>
        <taxon>Pseudomonadati</taxon>
        <taxon>Pseudomonadota</taxon>
        <taxon>Gammaproteobacteria</taxon>
        <taxon>Enterobacterales</taxon>
        <taxon>Enterobacteriaceae</taxon>
        <taxon>Escherichia</taxon>
    </lineage>
</organism>
<comment type="function">
    <text evidence="1">Catalyzes the oxidation of either pyridoxine 5'-phosphate (PNP) or pyridoxamine 5'-phosphate (PMP) into pyridoxal 5'-phosphate (PLP).</text>
</comment>
<comment type="catalytic activity">
    <reaction evidence="1">
        <text>pyridoxamine 5'-phosphate + O2 + H2O = pyridoxal 5'-phosphate + H2O2 + NH4(+)</text>
        <dbReference type="Rhea" id="RHEA:15817"/>
        <dbReference type="ChEBI" id="CHEBI:15377"/>
        <dbReference type="ChEBI" id="CHEBI:15379"/>
        <dbReference type="ChEBI" id="CHEBI:16240"/>
        <dbReference type="ChEBI" id="CHEBI:28938"/>
        <dbReference type="ChEBI" id="CHEBI:58451"/>
        <dbReference type="ChEBI" id="CHEBI:597326"/>
        <dbReference type="EC" id="1.4.3.5"/>
    </reaction>
</comment>
<comment type="catalytic activity">
    <reaction evidence="1">
        <text>pyridoxine 5'-phosphate + O2 = pyridoxal 5'-phosphate + H2O2</text>
        <dbReference type="Rhea" id="RHEA:15149"/>
        <dbReference type="ChEBI" id="CHEBI:15379"/>
        <dbReference type="ChEBI" id="CHEBI:16240"/>
        <dbReference type="ChEBI" id="CHEBI:58589"/>
        <dbReference type="ChEBI" id="CHEBI:597326"/>
        <dbReference type="EC" id="1.4.3.5"/>
    </reaction>
</comment>
<comment type="cofactor">
    <cofactor evidence="1">
        <name>FMN</name>
        <dbReference type="ChEBI" id="CHEBI:58210"/>
    </cofactor>
    <text evidence="1">Binds 1 FMN per subunit.</text>
</comment>
<comment type="pathway">
    <text evidence="1">Cofactor metabolism; pyridoxal 5'-phosphate salvage; pyridoxal 5'-phosphate from pyridoxamine 5'-phosphate: step 1/1.</text>
</comment>
<comment type="pathway">
    <text evidence="1">Cofactor metabolism; pyridoxal 5'-phosphate salvage; pyridoxal 5'-phosphate from pyridoxine 5'-phosphate: step 1/1.</text>
</comment>
<comment type="subunit">
    <text evidence="1">Homodimer.</text>
</comment>
<comment type="similarity">
    <text evidence="1">Belongs to the pyridoxamine 5'-phosphate oxidase family.</text>
</comment>